<sequence length="329" mass="37304">MASQLTDAFARKFYYLRLSITDVCNFRCTYCLPDGYKPSGVTNKGFLTVDEIRRVTRAFASLGTEKVRLTGGEPSLRRDFTDIIAAVRENDAIRQIAVTTNGYRLERDVANWRDAGLTGINVSVDSLDARQFHAITGQDKFNQVMAGIDAAFEAGFEKVKVNTVLMRDVNHHQLDTFLNWIQHRPIQLRFIELMETGEGSELFRKHHISGQVLRDELLRRGWIHQLRQRSDGPAQVFCHPDYAGEIGLIMPYEKDFCATCNRLRVSSIGKLHLCLFGEGGVNLRDLLEDDTQQQALEARISAALREKKQTHFLHQNNTGITQNLSYIGG</sequence>
<dbReference type="EC" id="4.1.99.22" evidence="1"/>
<dbReference type="EMBL" id="CP000036">
    <property type="protein sequence ID" value="ABB65347.1"/>
    <property type="molecule type" value="Genomic_DNA"/>
</dbReference>
<dbReference type="RefSeq" id="WP_001295301.1">
    <property type="nucleotide sequence ID" value="NC_007613.1"/>
</dbReference>
<dbReference type="SMR" id="Q324B1"/>
<dbReference type="GeneID" id="86863291"/>
<dbReference type="KEGG" id="sbo:SBO_0668"/>
<dbReference type="HOGENOM" id="CLU_009273_0_1_6"/>
<dbReference type="UniPathway" id="UPA00344"/>
<dbReference type="Proteomes" id="UP000007067">
    <property type="component" value="Chromosome"/>
</dbReference>
<dbReference type="GO" id="GO:0051539">
    <property type="term" value="F:4 iron, 4 sulfur cluster binding"/>
    <property type="evidence" value="ECO:0007669"/>
    <property type="project" value="UniProtKB-UniRule"/>
</dbReference>
<dbReference type="GO" id="GO:0061799">
    <property type="term" value="F:cyclic pyranopterin monophosphate synthase activity"/>
    <property type="evidence" value="ECO:0007669"/>
    <property type="project" value="TreeGrafter"/>
</dbReference>
<dbReference type="GO" id="GO:0061798">
    <property type="term" value="F:GTP 3',8'-cyclase activity"/>
    <property type="evidence" value="ECO:0007669"/>
    <property type="project" value="UniProtKB-UniRule"/>
</dbReference>
<dbReference type="GO" id="GO:0005525">
    <property type="term" value="F:GTP binding"/>
    <property type="evidence" value="ECO:0007669"/>
    <property type="project" value="UniProtKB-UniRule"/>
</dbReference>
<dbReference type="GO" id="GO:0046872">
    <property type="term" value="F:metal ion binding"/>
    <property type="evidence" value="ECO:0007669"/>
    <property type="project" value="UniProtKB-KW"/>
</dbReference>
<dbReference type="GO" id="GO:1904047">
    <property type="term" value="F:S-adenosyl-L-methionine binding"/>
    <property type="evidence" value="ECO:0007669"/>
    <property type="project" value="UniProtKB-UniRule"/>
</dbReference>
<dbReference type="GO" id="GO:0006777">
    <property type="term" value="P:Mo-molybdopterin cofactor biosynthetic process"/>
    <property type="evidence" value="ECO:0007669"/>
    <property type="project" value="UniProtKB-UniRule"/>
</dbReference>
<dbReference type="CDD" id="cd01335">
    <property type="entry name" value="Radical_SAM"/>
    <property type="match status" value="1"/>
</dbReference>
<dbReference type="CDD" id="cd21117">
    <property type="entry name" value="Twitch_MoaA"/>
    <property type="match status" value="1"/>
</dbReference>
<dbReference type="FunFam" id="3.20.20.70:FF:000057">
    <property type="entry name" value="GTP 3',8-cyclase"/>
    <property type="match status" value="1"/>
</dbReference>
<dbReference type="Gene3D" id="3.20.20.70">
    <property type="entry name" value="Aldolase class I"/>
    <property type="match status" value="1"/>
</dbReference>
<dbReference type="HAMAP" id="MF_01225_B">
    <property type="entry name" value="MoaA_B"/>
    <property type="match status" value="1"/>
</dbReference>
<dbReference type="InterPro" id="IPR013785">
    <property type="entry name" value="Aldolase_TIM"/>
</dbReference>
<dbReference type="InterPro" id="IPR006638">
    <property type="entry name" value="Elp3/MiaA/NifB-like_rSAM"/>
</dbReference>
<dbReference type="InterPro" id="IPR013483">
    <property type="entry name" value="MoaA"/>
</dbReference>
<dbReference type="InterPro" id="IPR000385">
    <property type="entry name" value="MoaA_NifB_PqqE_Fe-S-bd_CS"/>
</dbReference>
<dbReference type="InterPro" id="IPR010505">
    <property type="entry name" value="MoaA_twitch"/>
</dbReference>
<dbReference type="InterPro" id="IPR050105">
    <property type="entry name" value="MoCo_biosynth_MoaA/MoaC"/>
</dbReference>
<dbReference type="InterPro" id="IPR007197">
    <property type="entry name" value="rSAM"/>
</dbReference>
<dbReference type="NCBIfam" id="TIGR02666">
    <property type="entry name" value="moaA"/>
    <property type="match status" value="1"/>
</dbReference>
<dbReference type="PANTHER" id="PTHR22960:SF28">
    <property type="entry name" value="GTP 3',8-CYCLASE"/>
    <property type="match status" value="1"/>
</dbReference>
<dbReference type="PANTHER" id="PTHR22960">
    <property type="entry name" value="MOLYBDOPTERIN COFACTOR SYNTHESIS PROTEIN A"/>
    <property type="match status" value="1"/>
</dbReference>
<dbReference type="Pfam" id="PF13353">
    <property type="entry name" value="Fer4_12"/>
    <property type="match status" value="1"/>
</dbReference>
<dbReference type="Pfam" id="PF06463">
    <property type="entry name" value="Mob_synth_C"/>
    <property type="match status" value="1"/>
</dbReference>
<dbReference type="Pfam" id="PF04055">
    <property type="entry name" value="Radical_SAM"/>
    <property type="match status" value="1"/>
</dbReference>
<dbReference type="SFLD" id="SFLDG01383">
    <property type="entry name" value="cyclic_pyranopterin_phosphate"/>
    <property type="match status" value="1"/>
</dbReference>
<dbReference type="SFLD" id="SFLDG01072">
    <property type="entry name" value="dehydrogenase_like"/>
    <property type="match status" value="1"/>
</dbReference>
<dbReference type="SMART" id="SM00729">
    <property type="entry name" value="Elp3"/>
    <property type="match status" value="1"/>
</dbReference>
<dbReference type="SUPFAM" id="SSF102114">
    <property type="entry name" value="Radical SAM enzymes"/>
    <property type="match status" value="1"/>
</dbReference>
<dbReference type="PROSITE" id="PS01305">
    <property type="entry name" value="MOAA_NIFB_PQQE"/>
    <property type="match status" value="1"/>
</dbReference>
<dbReference type="PROSITE" id="PS51918">
    <property type="entry name" value="RADICAL_SAM"/>
    <property type="match status" value="1"/>
</dbReference>
<evidence type="ECO:0000255" key="1">
    <source>
        <dbReference type="HAMAP-Rule" id="MF_01225"/>
    </source>
</evidence>
<evidence type="ECO:0000255" key="2">
    <source>
        <dbReference type="PROSITE-ProRule" id="PRU01266"/>
    </source>
</evidence>
<proteinExistence type="inferred from homology"/>
<gene>
    <name evidence="1" type="primary">moaA</name>
    <name type="ordered locus">SBO_0668</name>
</gene>
<name>MOAA_SHIBS</name>
<reference key="1">
    <citation type="journal article" date="2005" name="Nucleic Acids Res.">
        <title>Genome dynamics and diversity of Shigella species, the etiologic agents of bacillary dysentery.</title>
        <authorList>
            <person name="Yang F."/>
            <person name="Yang J."/>
            <person name="Zhang X."/>
            <person name="Chen L."/>
            <person name="Jiang Y."/>
            <person name="Yan Y."/>
            <person name="Tang X."/>
            <person name="Wang J."/>
            <person name="Xiong Z."/>
            <person name="Dong J."/>
            <person name="Xue Y."/>
            <person name="Zhu Y."/>
            <person name="Xu X."/>
            <person name="Sun L."/>
            <person name="Chen S."/>
            <person name="Nie H."/>
            <person name="Peng J."/>
            <person name="Xu J."/>
            <person name="Wang Y."/>
            <person name="Yuan Z."/>
            <person name="Wen Y."/>
            <person name="Yao Z."/>
            <person name="Shen Y."/>
            <person name="Qiang B."/>
            <person name="Hou Y."/>
            <person name="Yu J."/>
            <person name="Jin Q."/>
        </authorList>
    </citation>
    <scope>NUCLEOTIDE SEQUENCE [LARGE SCALE GENOMIC DNA]</scope>
    <source>
        <strain>Sb227</strain>
    </source>
</reference>
<feature type="chain" id="PRO_1000054223" description="GTP 3',8-cyclase">
    <location>
        <begin position="1"/>
        <end position="329"/>
    </location>
</feature>
<feature type="domain" description="Radical SAM core" evidence="2">
    <location>
        <begin position="8"/>
        <end position="234"/>
    </location>
</feature>
<feature type="binding site" evidence="1">
    <location>
        <position position="17"/>
    </location>
    <ligand>
        <name>GTP</name>
        <dbReference type="ChEBI" id="CHEBI:37565"/>
    </ligand>
</feature>
<feature type="binding site" evidence="1">
    <location>
        <position position="24"/>
    </location>
    <ligand>
        <name>[4Fe-4S] cluster</name>
        <dbReference type="ChEBI" id="CHEBI:49883"/>
        <label>1</label>
        <note>4Fe-4S-S-AdoMet</note>
    </ligand>
</feature>
<feature type="binding site" evidence="1">
    <location>
        <position position="28"/>
    </location>
    <ligand>
        <name>[4Fe-4S] cluster</name>
        <dbReference type="ChEBI" id="CHEBI:49883"/>
        <label>1</label>
        <note>4Fe-4S-S-AdoMet</note>
    </ligand>
</feature>
<feature type="binding site" evidence="1">
    <location>
        <position position="30"/>
    </location>
    <ligand>
        <name>S-adenosyl-L-methionine</name>
        <dbReference type="ChEBI" id="CHEBI:59789"/>
    </ligand>
</feature>
<feature type="binding site" evidence="1">
    <location>
        <position position="31"/>
    </location>
    <ligand>
        <name>[4Fe-4S] cluster</name>
        <dbReference type="ChEBI" id="CHEBI:49883"/>
        <label>1</label>
        <note>4Fe-4S-S-AdoMet</note>
    </ligand>
</feature>
<feature type="binding site" evidence="1">
    <location>
        <position position="68"/>
    </location>
    <ligand>
        <name>GTP</name>
        <dbReference type="ChEBI" id="CHEBI:37565"/>
    </ligand>
</feature>
<feature type="binding site" evidence="1">
    <location>
        <position position="72"/>
    </location>
    <ligand>
        <name>S-adenosyl-L-methionine</name>
        <dbReference type="ChEBI" id="CHEBI:59789"/>
    </ligand>
</feature>
<feature type="binding site" evidence="1">
    <location>
        <position position="99"/>
    </location>
    <ligand>
        <name>GTP</name>
        <dbReference type="ChEBI" id="CHEBI:37565"/>
    </ligand>
</feature>
<feature type="binding site" evidence="1">
    <location>
        <position position="123"/>
    </location>
    <ligand>
        <name>S-adenosyl-L-methionine</name>
        <dbReference type="ChEBI" id="CHEBI:59789"/>
    </ligand>
</feature>
<feature type="binding site" evidence="1">
    <location>
        <position position="160"/>
    </location>
    <ligand>
        <name>GTP</name>
        <dbReference type="ChEBI" id="CHEBI:37565"/>
    </ligand>
</feature>
<feature type="binding site" evidence="1">
    <location>
        <position position="194"/>
    </location>
    <ligand>
        <name>S-adenosyl-L-methionine</name>
        <dbReference type="ChEBI" id="CHEBI:59789"/>
    </ligand>
</feature>
<feature type="binding site" evidence="1">
    <location>
        <position position="257"/>
    </location>
    <ligand>
        <name>[4Fe-4S] cluster</name>
        <dbReference type="ChEBI" id="CHEBI:49883"/>
        <label>2</label>
        <note>4Fe-4S-substrate</note>
    </ligand>
</feature>
<feature type="binding site" evidence="1">
    <location>
        <position position="260"/>
    </location>
    <ligand>
        <name>[4Fe-4S] cluster</name>
        <dbReference type="ChEBI" id="CHEBI:49883"/>
        <label>2</label>
        <note>4Fe-4S-substrate</note>
    </ligand>
</feature>
<feature type="binding site" evidence="1">
    <location>
        <begin position="262"/>
        <end position="264"/>
    </location>
    <ligand>
        <name>GTP</name>
        <dbReference type="ChEBI" id="CHEBI:37565"/>
    </ligand>
</feature>
<feature type="binding site" evidence="1">
    <location>
        <position position="274"/>
    </location>
    <ligand>
        <name>[4Fe-4S] cluster</name>
        <dbReference type="ChEBI" id="CHEBI:49883"/>
        <label>2</label>
        <note>4Fe-4S-substrate</note>
    </ligand>
</feature>
<accession>Q324B1</accession>
<protein>
    <recommendedName>
        <fullName evidence="1">GTP 3',8-cyclase</fullName>
        <ecNumber evidence="1">4.1.99.22</ecNumber>
    </recommendedName>
    <alternativeName>
        <fullName evidence="1">Molybdenum cofactor biosynthesis protein A</fullName>
    </alternativeName>
</protein>
<comment type="function">
    <text evidence="1">Catalyzes the cyclization of GTP to (8S)-3',8-cyclo-7,8-dihydroguanosine 5'-triphosphate.</text>
</comment>
<comment type="catalytic activity">
    <reaction evidence="1">
        <text>GTP + AH2 + S-adenosyl-L-methionine = (8S)-3',8-cyclo-7,8-dihydroguanosine 5'-triphosphate + 5'-deoxyadenosine + L-methionine + A + H(+)</text>
        <dbReference type="Rhea" id="RHEA:49576"/>
        <dbReference type="ChEBI" id="CHEBI:13193"/>
        <dbReference type="ChEBI" id="CHEBI:15378"/>
        <dbReference type="ChEBI" id="CHEBI:17319"/>
        <dbReference type="ChEBI" id="CHEBI:17499"/>
        <dbReference type="ChEBI" id="CHEBI:37565"/>
        <dbReference type="ChEBI" id="CHEBI:57844"/>
        <dbReference type="ChEBI" id="CHEBI:59789"/>
        <dbReference type="ChEBI" id="CHEBI:131766"/>
        <dbReference type="EC" id="4.1.99.22"/>
    </reaction>
</comment>
<comment type="cofactor">
    <cofactor evidence="1">
        <name>[4Fe-4S] cluster</name>
        <dbReference type="ChEBI" id="CHEBI:49883"/>
    </cofactor>
    <text evidence="1">Binds 2 [4Fe-4S] clusters. Binds 1 [4Fe-4S] cluster coordinated with 3 cysteines and an exchangeable S-adenosyl-L-methionine and 1 [4Fe-4S] cluster coordinated with 3 cysteines and the GTP-derived substrate.</text>
</comment>
<comment type="pathway">
    <text evidence="1">Cofactor biosynthesis; molybdopterin biosynthesis.</text>
</comment>
<comment type="subunit">
    <text evidence="1">Monomer and homodimer.</text>
</comment>
<comment type="similarity">
    <text evidence="1">Belongs to the radical SAM superfamily. MoaA family.</text>
</comment>
<organism>
    <name type="scientific">Shigella boydii serotype 4 (strain Sb227)</name>
    <dbReference type="NCBI Taxonomy" id="300268"/>
    <lineage>
        <taxon>Bacteria</taxon>
        <taxon>Pseudomonadati</taxon>
        <taxon>Pseudomonadota</taxon>
        <taxon>Gammaproteobacteria</taxon>
        <taxon>Enterobacterales</taxon>
        <taxon>Enterobacteriaceae</taxon>
        <taxon>Shigella</taxon>
    </lineage>
</organism>
<keyword id="KW-0004">4Fe-4S</keyword>
<keyword id="KW-0342">GTP-binding</keyword>
<keyword id="KW-0408">Iron</keyword>
<keyword id="KW-0411">Iron-sulfur</keyword>
<keyword id="KW-0456">Lyase</keyword>
<keyword id="KW-0479">Metal-binding</keyword>
<keyword id="KW-0501">Molybdenum cofactor biosynthesis</keyword>
<keyword id="KW-0547">Nucleotide-binding</keyword>
<keyword id="KW-0949">S-adenosyl-L-methionine</keyword>